<accession>Q88KV1</accession>
<proteinExistence type="evidence at protein level"/>
<protein>
    <recommendedName>
        <fullName evidence="5">tRNA 2-(methylsulfanyl)-N(6)-isopentenyladenosine(37) hydroxylase</fullName>
        <ecNumber evidence="2">1.14.99.69</ecNumber>
    </recommendedName>
    <alternativeName>
        <fullName evidence="1">2-methylthio-N6-isopentenyladenosine(37)-tRNA monooxygenase</fullName>
    </alternativeName>
    <alternativeName>
        <fullName evidence="1">tRNA-(ms[2]io[6]A37)-hydroxylase</fullName>
    </alternativeName>
</protein>
<sequence length="205" mass="23031">MSLIPEIDAFLGCPTPDAWIEAALADQETLLIDHKNCEFKAASTALSLIAKYNTHLDLINMMSRLAREELVHHEQVLRLMKRRGVPLRPVSAGRYASGLRRLVRAHEPVKLVDTLVVGAFIEARSCERFAALVPHLDEELGRFYHGLLKSEARHYQGYLKLAHNYGDEADIARCVELVRAAEMELIQSPDQELRFHSGIPQALAA</sequence>
<evidence type="ECO:0000250" key="1">
    <source>
        <dbReference type="UniProtKB" id="Q08015"/>
    </source>
</evidence>
<evidence type="ECO:0000269" key="2">
    <source>
    </source>
</evidence>
<evidence type="ECO:0000269" key="3">
    <source ref="2"/>
</evidence>
<evidence type="ECO:0000303" key="4">
    <source>
    </source>
</evidence>
<evidence type="ECO:0000305" key="5"/>
<evidence type="ECO:0000312" key="6">
    <source>
        <dbReference type="EMBL" id="AAN67801.1"/>
    </source>
</evidence>
<evidence type="ECO:0007744" key="7">
    <source>
        <dbReference type="PDB" id="2ITB"/>
    </source>
</evidence>
<evidence type="ECO:0007744" key="8">
    <source>
        <dbReference type="PDB" id="6ZMA"/>
    </source>
</evidence>
<evidence type="ECO:0007744" key="9">
    <source>
        <dbReference type="PDB" id="6ZMB"/>
    </source>
</evidence>
<evidence type="ECO:0007744" key="10">
    <source>
        <dbReference type="PDB" id="6ZMC"/>
    </source>
</evidence>
<evidence type="ECO:0007829" key="11">
    <source>
        <dbReference type="PDB" id="2ITB"/>
    </source>
</evidence>
<name>MIAE_PSEPK</name>
<feature type="chain" id="PRO_0000454384" description="tRNA 2-(methylsulfanyl)-N(6)-isopentenyladenosine(37) hydroxylase">
    <location>
        <begin position="1"/>
        <end position="205"/>
    </location>
</feature>
<feature type="binding site" evidence="2 3 7 8 9 10">
    <location>
        <position position="38"/>
    </location>
    <ligand>
        <name>Fe cation</name>
        <dbReference type="ChEBI" id="CHEBI:24875"/>
        <label>1</label>
    </ligand>
</feature>
<feature type="binding site" evidence="2 3 7 8 9 10">
    <location>
        <position position="69"/>
    </location>
    <ligand>
        <name>Fe cation</name>
        <dbReference type="ChEBI" id="CHEBI:24875"/>
        <label>1</label>
    </ligand>
</feature>
<feature type="binding site" evidence="2 3 7 8 9 10">
    <location>
        <position position="69"/>
    </location>
    <ligand>
        <name>Fe cation</name>
        <dbReference type="ChEBI" id="CHEBI:24875"/>
        <label>2</label>
    </ligand>
</feature>
<feature type="binding site" evidence="2 3 7 8 9 10">
    <location>
        <position position="72"/>
    </location>
    <ligand>
        <name>Fe cation</name>
        <dbReference type="ChEBI" id="CHEBI:24875"/>
        <label>1</label>
    </ligand>
</feature>
<feature type="binding site" evidence="2 3 7 8 9 10">
    <location>
        <position position="122"/>
    </location>
    <ligand>
        <name>Fe cation</name>
        <dbReference type="ChEBI" id="CHEBI:24875"/>
        <label>2</label>
    </ligand>
</feature>
<feature type="binding site" evidence="2 8 9 10">
    <location>
        <position position="151"/>
    </location>
    <ligand>
        <name>Fe cation</name>
        <dbReference type="ChEBI" id="CHEBI:24875"/>
        <label>2</label>
    </ligand>
</feature>
<feature type="binding site" evidence="2 3 7 8 9 10">
    <location>
        <position position="154"/>
    </location>
    <ligand>
        <name>Fe cation</name>
        <dbReference type="ChEBI" id="CHEBI:24875"/>
        <label>2</label>
    </ligand>
</feature>
<feature type="mutagenesis site" description="Loss of activity." evidence="2">
    <original>K</original>
    <variation>D</variation>
    <location>
        <position position="40"/>
    </location>
</feature>
<feature type="mutagenesis site" description="Loss of activity." evidence="2">
    <original>R</original>
    <variation>E</variation>
    <location>
        <position position="100"/>
    </location>
</feature>
<feature type="helix" evidence="11">
    <location>
        <begin position="7"/>
        <end position="10"/>
    </location>
</feature>
<feature type="strand" evidence="11">
    <location>
        <begin position="11"/>
        <end position="13"/>
    </location>
</feature>
<feature type="helix" evidence="11">
    <location>
        <begin position="17"/>
        <end position="24"/>
    </location>
</feature>
<feature type="helix" evidence="11">
    <location>
        <begin position="27"/>
        <end position="51"/>
    </location>
</feature>
<feature type="turn" evidence="11">
    <location>
        <begin position="52"/>
        <end position="54"/>
    </location>
</feature>
<feature type="helix" evidence="11">
    <location>
        <begin position="56"/>
        <end position="82"/>
    </location>
</feature>
<feature type="helix" evidence="11">
    <location>
        <begin position="95"/>
        <end position="100"/>
    </location>
</feature>
<feature type="helix" evidence="11">
    <location>
        <begin position="109"/>
        <end position="132"/>
    </location>
</feature>
<feature type="helix" evidence="11">
    <location>
        <begin position="133"/>
        <end position="135"/>
    </location>
</feature>
<feature type="helix" evidence="11">
    <location>
        <begin position="138"/>
        <end position="165"/>
    </location>
</feature>
<feature type="helix" evidence="11">
    <location>
        <begin position="168"/>
        <end position="187"/>
    </location>
</feature>
<feature type="strand" evidence="11">
    <location>
        <begin position="188"/>
        <end position="192"/>
    </location>
</feature>
<organism>
    <name type="scientific">Pseudomonas putida (strain ATCC 47054 / DSM 6125 / CFBP 8728 / NCIMB 11950 / KT2440)</name>
    <dbReference type="NCBI Taxonomy" id="160488"/>
    <lineage>
        <taxon>Bacteria</taxon>
        <taxon>Pseudomonadati</taxon>
        <taxon>Pseudomonadota</taxon>
        <taxon>Gammaproteobacteria</taxon>
        <taxon>Pseudomonadales</taxon>
        <taxon>Pseudomonadaceae</taxon>
        <taxon>Pseudomonas</taxon>
    </lineage>
</organism>
<reference key="1">
    <citation type="journal article" date="2002" name="Environ. Microbiol.">
        <title>Complete genome sequence and comparative analysis of the metabolically versatile Pseudomonas putida KT2440.</title>
        <authorList>
            <person name="Nelson K.E."/>
            <person name="Weinel C."/>
            <person name="Paulsen I.T."/>
            <person name="Dodson R.J."/>
            <person name="Hilbert H."/>
            <person name="Martins dos Santos V.A.P."/>
            <person name="Fouts D.E."/>
            <person name="Gill S.R."/>
            <person name="Pop M."/>
            <person name="Holmes M."/>
            <person name="Brinkac L.M."/>
            <person name="Beanan M.J."/>
            <person name="DeBoy R.T."/>
            <person name="Daugherty S.C."/>
            <person name="Kolonay J.F."/>
            <person name="Madupu R."/>
            <person name="Nelson W.C."/>
            <person name="White O."/>
            <person name="Peterson J.D."/>
            <person name="Khouri H.M."/>
            <person name="Hance I."/>
            <person name="Chris Lee P."/>
            <person name="Holtzapple E.K."/>
            <person name="Scanlan D."/>
            <person name="Tran K."/>
            <person name="Moazzez A."/>
            <person name="Utterback T.R."/>
            <person name="Rizzo M."/>
            <person name="Lee K."/>
            <person name="Kosack D."/>
            <person name="Moestl D."/>
            <person name="Wedler H."/>
            <person name="Lauber J."/>
            <person name="Stjepandic D."/>
            <person name="Hoheisel J."/>
            <person name="Straetz M."/>
            <person name="Heim S."/>
            <person name="Kiewitz C."/>
            <person name="Eisen J.A."/>
            <person name="Timmis K.N."/>
            <person name="Duesterhoeft A."/>
            <person name="Tuemmler B."/>
            <person name="Fraser C.M."/>
        </authorList>
    </citation>
    <scope>NUCLEOTIDE SEQUENCE [LARGE SCALE GENOMIC DNA]</scope>
    <source>
        <strain>ATCC 47054 / DSM 6125 / CFBP 8728 / NCIMB 11950 / KT2440</strain>
    </source>
</reference>
<reference evidence="7" key="2">
    <citation type="submission" date="2006-10" db="PDB data bank">
        <title>Crystal structure of putative tRNA-(ms(2)io(6)a)-hydroxylase (NP_744337.1) from Pseudomonas Putida KT2440 at 2.05 A resolution.</title>
        <authorList>
            <consortium name="Joint Center for Structural Genomics (JCSG)"/>
        </authorList>
    </citation>
    <scope>X-RAY CRYSTALLOGRAPHY (2.05 ANGSTROMS) IN COMPLEX WITH IRON</scope>
    <source>
        <strain>ATCC 47054 / DSM 6125 / CFBP 8728 / NCIMB 11950 / KT2440</strain>
    </source>
</reference>
<reference evidence="8 9 10" key="3">
    <citation type="journal article" date="2020" name="Nucleic Acids Res.">
        <title>Structural, biochemical and functional analyses of tRNA-monooxygenase enzyme MiaE from Pseudomonas putida provide insights into tRNA/MiaE interaction.</title>
        <authorList>
            <person name="Carpentier P."/>
            <person name="Lepretre C."/>
            <person name="Basset C."/>
            <person name="Douki T."/>
            <person name="Torelli S."/>
            <person name="Duarte V."/>
            <person name="Hamdane D."/>
            <person name="Fontecave M."/>
            <person name="Atta M."/>
        </authorList>
    </citation>
    <scope>X-RAY CRYSTALLOGRAPHY (1.70 ANGSTROMS) OF 3-201</scope>
    <scope>FUNCTION</scope>
    <scope>CATALYTIC ACTIVITY</scope>
    <scope>COFACTOR</scope>
    <scope>PATHWAY</scope>
    <scope>SUBUNIT</scope>
    <scope>MUTAGENESIS OF LYS-40 AND ARG-100</scope>
    <source>
        <strain>ATCC 47054 / DSM 6125 / CFBP 8728 / NCIMB 11950 / KT2440</strain>
    </source>
</reference>
<comment type="function">
    <text evidence="2">Involved in specific tRNA modification. Catalyzes the oxygen-dependent hydroxylation of 2-methylthio-N-6-isopentenyl adenosine (ms2i6A) to produce 2-methylthio-N-6-(cis-hydroxy)isopentenyl adenosine (ms2io6A) at position 37 in tRNAs.</text>
</comment>
<comment type="catalytic activity">
    <reaction evidence="2">
        <text>2-methylsulfanyl-N(6)-dimethylallyladenosine(37) in tRNA + AH2 + O2 = N(6)-[(2E)-4-hydroxy-3-methylbut-2-en-1-yl]-2-(methylsulfanyl)adenosine(37) in tRNA + A + H2O</text>
        <dbReference type="Rhea" id="RHEA:65812"/>
        <dbReference type="Rhea" id="RHEA-COMP:10376"/>
        <dbReference type="Rhea" id="RHEA-COMP:17048"/>
        <dbReference type="ChEBI" id="CHEBI:13193"/>
        <dbReference type="ChEBI" id="CHEBI:15377"/>
        <dbReference type="ChEBI" id="CHEBI:15379"/>
        <dbReference type="ChEBI" id="CHEBI:17499"/>
        <dbReference type="ChEBI" id="CHEBI:74417"/>
        <dbReference type="ChEBI" id="CHEBI:157739"/>
        <dbReference type="EC" id="1.14.99.69"/>
    </reaction>
    <physiologicalReaction direction="left-to-right" evidence="2">
        <dbReference type="Rhea" id="RHEA:65813"/>
    </physiologicalReaction>
</comment>
<comment type="cofactor">
    <cofactor evidence="2">
        <name>Fe cation</name>
        <dbReference type="ChEBI" id="CHEBI:24875"/>
    </cofactor>
    <text evidence="2">Contains a nonheme dinuclear iron cluster.</text>
</comment>
<comment type="pathway">
    <text evidence="2">tRNA modification; 2-methylthio-N-6-(cis-hydroxy)isopentenyl adenosine-tRNA biosynthesis.</text>
</comment>
<comment type="subunit">
    <text evidence="2">Homodimer.</text>
</comment>
<comment type="similarity">
    <text evidence="5">Belongs to the MiaE family.</text>
</comment>
<gene>
    <name evidence="4" type="primary">miaE</name>
    <name evidence="6" type="ordered locus">PP_2188</name>
</gene>
<dbReference type="EC" id="1.14.99.69" evidence="2"/>
<dbReference type="EMBL" id="AE015451">
    <property type="protein sequence ID" value="AAN67801.1"/>
    <property type="molecule type" value="Genomic_DNA"/>
</dbReference>
<dbReference type="RefSeq" id="NP_744337.1">
    <property type="nucleotide sequence ID" value="NC_002947.4"/>
</dbReference>
<dbReference type="RefSeq" id="WP_010953173.1">
    <property type="nucleotide sequence ID" value="NZ_CP169744.1"/>
</dbReference>
<dbReference type="PDB" id="2ITB">
    <property type="method" value="X-ray"/>
    <property type="resolution" value="2.05 A"/>
    <property type="chains" value="A/B=1-205"/>
</dbReference>
<dbReference type="PDB" id="6ZMA">
    <property type="method" value="X-ray"/>
    <property type="resolution" value="2.15 A"/>
    <property type="chains" value="B/C=3-201"/>
</dbReference>
<dbReference type="PDB" id="6ZMB">
    <property type="method" value="X-ray"/>
    <property type="resolution" value="1.70 A"/>
    <property type="chains" value="B/C=3-201"/>
</dbReference>
<dbReference type="PDB" id="6ZMC">
    <property type="method" value="X-ray"/>
    <property type="resolution" value="2.50 A"/>
    <property type="chains" value="B/C=3-201"/>
</dbReference>
<dbReference type="PDBsum" id="2ITB"/>
<dbReference type="PDBsum" id="6ZMA"/>
<dbReference type="PDBsum" id="6ZMB"/>
<dbReference type="PDBsum" id="6ZMC"/>
<dbReference type="SMR" id="Q88KV1"/>
<dbReference type="STRING" id="160488.PP_2188"/>
<dbReference type="PaxDb" id="160488-PP_2188"/>
<dbReference type="DNASU" id="1045049"/>
<dbReference type="GeneID" id="83681289"/>
<dbReference type="KEGG" id="ppu:PP_2188"/>
<dbReference type="PATRIC" id="fig|160488.4.peg.2307"/>
<dbReference type="eggNOG" id="COG4445">
    <property type="taxonomic scope" value="Bacteria"/>
</dbReference>
<dbReference type="HOGENOM" id="CLU_056571_0_0_6"/>
<dbReference type="OrthoDB" id="9802518at2"/>
<dbReference type="PhylomeDB" id="Q88KV1"/>
<dbReference type="BioCyc" id="PPUT160488:G1G01-2329-MONOMER"/>
<dbReference type="BRENDA" id="1.14.99.69">
    <property type="organism ID" value="5092"/>
</dbReference>
<dbReference type="UniPathway" id="UPA00729"/>
<dbReference type="EvolutionaryTrace" id="Q88KV1"/>
<dbReference type="Proteomes" id="UP000000556">
    <property type="component" value="Chromosome"/>
</dbReference>
<dbReference type="GO" id="GO:0046872">
    <property type="term" value="F:metal ion binding"/>
    <property type="evidence" value="ECO:0007669"/>
    <property type="project" value="UniProtKB-KW"/>
</dbReference>
<dbReference type="GO" id="GO:0004497">
    <property type="term" value="F:monooxygenase activity"/>
    <property type="evidence" value="ECO:0007669"/>
    <property type="project" value="UniProtKB-KW"/>
</dbReference>
<dbReference type="GO" id="GO:0045301">
    <property type="term" value="F:tRNA 2-(methylsulfanyl)-N(6)-isopentenyladenosine(37) hydroxylase activity"/>
    <property type="evidence" value="ECO:0007669"/>
    <property type="project" value="InterPro"/>
</dbReference>
<dbReference type="GO" id="GO:0006400">
    <property type="term" value="P:tRNA modification"/>
    <property type="evidence" value="ECO:0007669"/>
    <property type="project" value="InterPro"/>
</dbReference>
<dbReference type="CDD" id="cd07910">
    <property type="entry name" value="MiaE"/>
    <property type="match status" value="1"/>
</dbReference>
<dbReference type="Gene3D" id="1.20.1260.10">
    <property type="match status" value="1"/>
</dbReference>
<dbReference type="InterPro" id="IPR012347">
    <property type="entry name" value="Ferritin-like"/>
</dbReference>
<dbReference type="InterPro" id="IPR009078">
    <property type="entry name" value="Ferritin-like_SF"/>
</dbReference>
<dbReference type="InterPro" id="IPR010386">
    <property type="entry name" value="tRNA-Hydrxlase_MiaE"/>
</dbReference>
<dbReference type="PANTHER" id="PTHR42637:SF1">
    <property type="entry name" value="TRNA 2-(METHYLSULFANYL)-N(6)-ISOPENTENYLADENOSINE(37) HYDROXYLASE"/>
    <property type="match status" value="1"/>
</dbReference>
<dbReference type="PANTHER" id="PTHR42637">
    <property type="entry name" value="TRNA-(MS[2]IO[6]A)-HYDROXYLASE"/>
    <property type="match status" value="1"/>
</dbReference>
<dbReference type="Pfam" id="PF06175">
    <property type="entry name" value="MiaE"/>
    <property type="match status" value="1"/>
</dbReference>
<dbReference type="PIRSF" id="PIRSF020736">
    <property type="entry name" value="MiaE"/>
    <property type="match status" value="1"/>
</dbReference>
<dbReference type="SUPFAM" id="SSF47240">
    <property type="entry name" value="Ferritin-like"/>
    <property type="match status" value="1"/>
</dbReference>
<keyword id="KW-0002">3D-structure</keyword>
<keyword id="KW-0408">Iron</keyword>
<keyword id="KW-0479">Metal-binding</keyword>
<keyword id="KW-0503">Monooxygenase</keyword>
<keyword id="KW-0560">Oxidoreductase</keyword>
<keyword id="KW-1185">Reference proteome</keyword>
<keyword id="KW-0819">tRNA processing</keyword>